<name>TGT_STAA2</name>
<sequence length="379" mass="43310">MPAVTYEHIKTCKQSGARLGIVHTPHGSFETPMFMPVGTKATVKTMSPEELRQIEAKIILGNTYHLWLQPGNDIIKHAGGLHKFMNWDGPILTDSGGFQVFSLSNLRKITEEGVEFRHHTNGSKLFLSPEKSMQIQNDLGSDIMMAFDECPPMPAEYDYVKKSIERTTRWAKRCLDAHQRPEDQALFGIIQGGEYEDLREQSAKDLVELDFPGYAIGGLSVGEPKPVMYKMVEHTEQFMPKDKPRYLMGVGSPDALIECSIRGMDMFDCVLPTRIARNGTCMTSQGRLVIKNAKFADDLRPLDENCDCYTCQNYSRAYIRHLIKAEETFGIRLTTIHNLHFLLKLMEDIRQAIREDRLLDFKEEFFEQYGLNVENPKNF</sequence>
<comment type="function">
    <text evidence="1">Catalyzes the base-exchange of a guanine (G) residue with the queuine precursor 7-aminomethyl-7-deazaguanine (PreQ1) at position 34 (anticodon wobble position) in tRNAs with GU(N) anticodons (tRNA-Asp, -Asn, -His and -Tyr). Catalysis occurs through a double-displacement mechanism. The nucleophile active site attacks the C1' of nucleotide 34 to detach the guanine base from the RNA, forming a covalent enzyme-RNA intermediate. The proton acceptor active site deprotonates the incoming PreQ1, allowing a nucleophilic attack on the C1' of the ribose to form the product. After dissociation, two additional enzymatic reactions on the tRNA convert PreQ1 to queuine (Q), resulting in the hypermodified nucleoside queuosine (7-(((4,5-cis-dihydroxy-2-cyclopenten-1-yl)amino)methyl)-7-deazaguanosine).</text>
</comment>
<comment type="catalytic activity">
    <reaction evidence="1">
        <text>7-aminomethyl-7-carbaguanine + guanosine(34) in tRNA = 7-aminomethyl-7-carbaguanosine(34) in tRNA + guanine</text>
        <dbReference type="Rhea" id="RHEA:24104"/>
        <dbReference type="Rhea" id="RHEA-COMP:10341"/>
        <dbReference type="Rhea" id="RHEA-COMP:10342"/>
        <dbReference type="ChEBI" id="CHEBI:16235"/>
        <dbReference type="ChEBI" id="CHEBI:58703"/>
        <dbReference type="ChEBI" id="CHEBI:74269"/>
        <dbReference type="ChEBI" id="CHEBI:82833"/>
        <dbReference type="EC" id="2.4.2.29"/>
    </reaction>
</comment>
<comment type="cofactor">
    <cofactor evidence="1">
        <name>Zn(2+)</name>
        <dbReference type="ChEBI" id="CHEBI:29105"/>
    </cofactor>
    <text evidence="1">Binds 1 zinc ion per subunit.</text>
</comment>
<comment type="pathway">
    <text evidence="1">tRNA modification; tRNA-queuosine biosynthesis.</text>
</comment>
<comment type="subunit">
    <text evidence="1">Homodimer. Within each dimer, one monomer is responsible for RNA recognition and catalysis, while the other monomer binds to the replacement base PreQ1.</text>
</comment>
<comment type="similarity">
    <text evidence="1">Belongs to the queuine tRNA-ribosyltransferase family.</text>
</comment>
<proteinExistence type="inferred from homology"/>
<feature type="chain" id="PRO_1000077022" description="Queuine tRNA-ribosyltransferase">
    <location>
        <begin position="1"/>
        <end position="379"/>
    </location>
</feature>
<feature type="region of interest" description="RNA binding" evidence="1">
    <location>
        <begin position="249"/>
        <end position="255"/>
    </location>
</feature>
<feature type="region of interest" description="RNA binding; important for wobble base 34 recognition" evidence="1">
    <location>
        <begin position="273"/>
        <end position="277"/>
    </location>
</feature>
<feature type="active site" description="Proton acceptor" evidence="1">
    <location>
        <position position="94"/>
    </location>
</feature>
<feature type="active site" description="Nucleophile" evidence="1">
    <location>
        <position position="268"/>
    </location>
</feature>
<feature type="binding site" evidence="1">
    <location>
        <begin position="94"/>
        <end position="98"/>
    </location>
    <ligand>
        <name>substrate</name>
    </ligand>
</feature>
<feature type="binding site" evidence="1">
    <location>
        <position position="148"/>
    </location>
    <ligand>
        <name>substrate</name>
    </ligand>
</feature>
<feature type="binding site" evidence="1">
    <location>
        <position position="191"/>
    </location>
    <ligand>
        <name>substrate</name>
    </ligand>
</feature>
<feature type="binding site" evidence="1">
    <location>
        <position position="218"/>
    </location>
    <ligand>
        <name>substrate</name>
    </ligand>
</feature>
<feature type="binding site" evidence="1">
    <location>
        <position position="306"/>
    </location>
    <ligand>
        <name>Zn(2+)</name>
        <dbReference type="ChEBI" id="CHEBI:29105"/>
    </ligand>
</feature>
<feature type="binding site" evidence="1">
    <location>
        <position position="308"/>
    </location>
    <ligand>
        <name>Zn(2+)</name>
        <dbReference type="ChEBI" id="CHEBI:29105"/>
    </ligand>
</feature>
<feature type="binding site" evidence="1">
    <location>
        <position position="311"/>
    </location>
    <ligand>
        <name>Zn(2+)</name>
        <dbReference type="ChEBI" id="CHEBI:29105"/>
    </ligand>
</feature>
<feature type="binding site" evidence="1">
    <location>
        <position position="337"/>
    </location>
    <ligand>
        <name>Zn(2+)</name>
        <dbReference type="ChEBI" id="CHEBI:29105"/>
    </ligand>
</feature>
<dbReference type="EC" id="2.4.2.29" evidence="1"/>
<dbReference type="EMBL" id="CP000736">
    <property type="protein sequence ID" value="ABR52575.1"/>
    <property type="molecule type" value="Genomic_DNA"/>
</dbReference>
<dbReference type="SMR" id="A6U2A7"/>
<dbReference type="KEGG" id="sah:SaurJH1_1729"/>
<dbReference type="HOGENOM" id="CLU_022060_0_1_9"/>
<dbReference type="UniPathway" id="UPA00392"/>
<dbReference type="GO" id="GO:0005829">
    <property type="term" value="C:cytosol"/>
    <property type="evidence" value="ECO:0007669"/>
    <property type="project" value="TreeGrafter"/>
</dbReference>
<dbReference type="GO" id="GO:0046872">
    <property type="term" value="F:metal ion binding"/>
    <property type="evidence" value="ECO:0007669"/>
    <property type="project" value="UniProtKB-KW"/>
</dbReference>
<dbReference type="GO" id="GO:0008479">
    <property type="term" value="F:tRNA-guanosine(34) queuine transglycosylase activity"/>
    <property type="evidence" value="ECO:0007669"/>
    <property type="project" value="UniProtKB-UniRule"/>
</dbReference>
<dbReference type="GO" id="GO:0008616">
    <property type="term" value="P:queuosine biosynthetic process"/>
    <property type="evidence" value="ECO:0007669"/>
    <property type="project" value="UniProtKB-UniRule"/>
</dbReference>
<dbReference type="GO" id="GO:0002099">
    <property type="term" value="P:tRNA wobble guanine modification"/>
    <property type="evidence" value="ECO:0007669"/>
    <property type="project" value="TreeGrafter"/>
</dbReference>
<dbReference type="GO" id="GO:0101030">
    <property type="term" value="P:tRNA-guanine transglycosylation"/>
    <property type="evidence" value="ECO:0007669"/>
    <property type="project" value="InterPro"/>
</dbReference>
<dbReference type="FunFam" id="3.20.20.105:FF:000001">
    <property type="entry name" value="Queuine tRNA-ribosyltransferase"/>
    <property type="match status" value="1"/>
</dbReference>
<dbReference type="Gene3D" id="3.20.20.105">
    <property type="entry name" value="Queuine tRNA-ribosyltransferase-like"/>
    <property type="match status" value="1"/>
</dbReference>
<dbReference type="HAMAP" id="MF_00168">
    <property type="entry name" value="Q_tRNA_Tgt"/>
    <property type="match status" value="1"/>
</dbReference>
<dbReference type="InterPro" id="IPR050076">
    <property type="entry name" value="ArchSynthase1/Queuine_TRR"/>
</dbReference>
<dbReference type="InterPro" id="IPR004803">
    <property type="entry name" value="TGT"/>
</dbReference>
<dbReference type="InterPro" id="IPR036511">
    <property type="entry name" value="TGT-like_sf"/>
</dbReference>
<dbReference type="InterPro" id="IPR002616">
    <property type="entry name" value="tRNA_ribo_trans-like"/>
</dbReference>
<dbReference type="NCBIfam" id="TIGR00430">
    <property type="entry name" value="Q_tRNA_tgt"/>
    <property type="match status" value="1"/>
</dbReference>
<dbReference type="NCBIfam" id="TIGR00449">
    <property type="entry name" value="tgt_general"/>
    <property type="match status" value="1"/>
</dbReference>
<dbReference type="PANTHER" id="PTHR46499">
    <property type="entry name" value="QUEUINE TRNA-RIBOSYLTRANSFERASE"/>
    <property type="match status" value="1"/>
</dbReference>
<dbReference type="PANTHER" id="PTHR46499:SF1">
    <property type="entry name" value="QUEUINE TRNA-RIBOSYLTRANSFERASE"/>
    <property type="match status" value="1"/>
</dbReference>
<dbReference type="Pfam" id="PF01702">
    <property type="entry name" value="TGT"/>
    <property type="match status" value="1"/>
</dbReference>
<dbReference type="SUPFAM" id="SSF51713">
    <property type="entry name" value="tRNA-guanine transglycosylase"/>
    <property type="match status" value="1"/>
</dbReference>
<keyword id="KW-0328">Glycosyltransferase</keyword>
<keyword id="KW-0479">Metal-binding</keyword>
<keyword id="KW-0671">Queuosine biosynthesis</keyword>
<keyword id="KW-0808">Transferase</keyword>
<keyword id="KW-0819">tRNA processing</keyword>
<keyword id="KW-0862">Zinc</keyword>
<reference key="1">
    <citation type="submission" date="2007-06" db="EMBL/GenBank/DDBJ databases">
        <title>Complete sequence of chromosome of Staphylococcus aureus subsp. aureus JH1.</title>
        <authorList>
            <consortium name="US DOE Joint Genome Institute"/>
            <person name="Copeland A."/>
            <person name="Lucas S."/>
            <person name="Lapidus A."/>
            <person name="Barry K."/>
            <person name="Detter J.C."/>
            <person name="Glavina del Rio T."/>
            <person name="Hammon N."/>
            <person name="Israni S."/>
            <person name="Dalin E."/>
            <person name="Tice H."/>
            <person name="Pitluck S."/>
            <person name="Chain P."/>
            <person name="Malfatti S."/>
            <person name="Shin M."/>
            <person name="Vergez L."/>
            <person name="Schmutz J."/>
            <person name="Larimer F."/>
            <person name="Land M."/>
            <person name="Hauser L."/>
            <person name="Kyrpides N."/>
            <person name="Ivanova N."/>
            <person name="Tomasz A."/>
            <person name="Richardson P."/>
        </authorList>
    </citation>
    <scope>NUCLEOTIDE SEQUENCE [LARGE SCALE GENOMIC DNA]</scope>
    <source>
        <strain>JH1</strain>
    </source>
</reference>
<evidence type="ECO:0000255" key="1">
    <source>
        <dbReference type="HAMAP-Rule" id="MF_00168"/>
    </source>
</evidence>
<gene>
    <name evidence="1" type="primary">tgt</name>
    <name type="ordered locus">SaurJH1_1729</name>
</gene>
<organism>
    <name type="scientific">Staphylococcus aureus (strain JH1)</name>
    <dbReference type="NCBI Taxonomy" id="359787"/>
    <lineage>
        <taxon>Bacteria</taxon>
        <taxon>Bacillati</taxon>
        <taxon>Bacillota</taxon>
        <taxon>Bacilli</taxon>
        <taxon>Bacillales</taxon>
        <taxon>Staphylococcaceae</taxon>
        <taxon>Staphylococcus</taxon>
    </lineage>
</organism>
<protein>
    <recommendedName>
        <fullName evidence="1">Queuine tRNA-ribosyltransferase</fullName>
        <ecNumber evidence="1">2.4.2.29</ecNumber>
    </recommendedName>
    <alternativeName>
        <fullName evidence="1">Guanine insertion enzyme</fullName>
    </alternativeName>
    <alternativeName>
        <fullName evidence="1">tRNA-guanine transglycosylase</fullName>
    </alternativeName>
</protein>
<accession>A6U2A7</accession>